<organism>
    <name type="scientific">Methanoregula boonei (strain DSM 21154 / JCM 14090 / 6A8)</name>
    <dbReference type="NCBI Taxonomy" id="456442"/>
    <lineage>
        <taxon>Archaea</taxon>
        <taxon>Methanobacteriati</taxon>
        <taxon>Methanobacteriota</taxon>
        <taxon>Stenosarchaea group</taxon>
        <taxon>Methanomicrobia</taxon>
        <taxon>Methanomicrobiales</taxon>
        <taxon>Methanoregulaceae</taxon>
        <taxon>Methanoregula</taxon>
    </lineage>
</organism>
<accession>A7I6K3</accession>
<proteinExistence type="inferred from homology"/>
<sequence length="415" mass="45818">MYSPDTTKYLIHISLTAEGVVEKPDVVGAIFGQTEGLLGEDLDLRDLQRTGRVGRIDVQIASKKGETSGEILISTSLDRAETAILAASLETIDRVGPCVAHVSVKMVEDIRVSKRKKIVERAKEILVERFDDGTIDSDELLDDVRQTLRVEKIGTIGEEKLPAGPNVLESDAIIIVEGRADVINLLRYGIKNTVAVEGTNIPKSIVELTEKKTTTAFFDGDRGGELILRELLQVADIDFVAFSPRGKSVEDMSKKEVIKTLRNKVPVEYVRDQYFEDSAELPGDLGGRPARTAPAHDEGGNSDTTGKQAVSQKRIRDGTSKVPTTLRDHMDDVKGKNVARFLNQDMVVIRESRSEEVEKAVETLEEPAAGVVVDRTVDQKLLDRLVWKGLEYVAAKDFKGIIKRPLNIRLMKMSS</sequence>
<protein>
    <recommendedName>
        <fullName evidence="1">DNA primase DnaG</fullName>
        <ecNumber evidence="1">2.7.7.101</ecNumber>
    </recommendedName>
</protein>
<evidence type="ECO:0000255" key="1">
    <source>
        <dbReference type="HAMAP-Rule" id="MF_00007"/>
    </source>
</evidence>
<evidence type="ECO:0000256" key="2">
    <source>
        <dbReference type="SAM" id="MobiDB-lite"/>
    </source>
</evidence>
<name>DNAG_METB6</name>
<reference key="1">
    <citation type="journal article" date="2015" name="Microbiology">
        <title>Genome of Methanoregula boonei 6A8 reveals adaptations to oligotrophic peatland environments.</title>
        <authorList>
            <person name="Braeuer S."/>
            <person name="Cadillo-Quiroz H."/>
            <person name="Kyrpides N."/>
            <person name="Woyke T."/>
            <person name="Goodwin L."/>
            <person name="Detter C."/>
            <person name="Podell S."/>
            <person name="Yavitt J.B."/>
            <person name="Zinder S.H."/>
        </authorList>
    </citation>
    <scope>NUCLEOTIDE SEQUENCE [LARGE SCALE GENOMIC DNA]</scope>
    <source>
        <strain>DSM 21154 / JCM 14090 / 6A8</strain>
    </source>
</reference>
<keyword id="KW-0235">DNA replication</keyword>
<keyword id="KW-0240">DNA-directed RNA polymerase</keyword>
<keyword id="KW-0460">Magnesium</keyword>
<keyword id="KW-0479">Metal-binding</keyword>
<keyword id="KW-0548">Nucleotidyltransferase</keyword>
<keyword id="KW-0639">Primosome</keyword>
<keyword id="KW-1185">Reference proteome</keyword>
<keyword id="KW-0804">Transcription</keyword>
<keyword id="KW-0808">Transferase</keyword>
<comment type="function">
    <text evidence="1">RNA polymerase that catalyzes the synthesis of short RNA molecules used as primers for DNA polymerase during DNA replication.</text>
</comment>
<comment type="catalytic activity">
    <reaction evidence="1">
        <text>ssDNA + n NTP = ssDNA/pppN(pN)n-1 hybrid + (n-1) diphosphate.</text>
        <dbReference type="EC" id="2.7.7.101"/>
    </reaction>
</comment>
<comment type="cofactor">
    <cofactor evidence="1">
        <name>Mg(2+)</name>
        <dbReference type="ChEBI" id="CHEBI:18420"/>
    </cofactor>
    <text evidence="1">Binds two Mg(2+) per subunit.</text>
</comment>
<comment type="subunit">
    <text evidence="1">Forms a ternary complex with MCM helicase and DNA.</text>
</comment>
<comment type="similarity">
    <text evidence="1">Belongs to the archaeal DnaG primase family.</text>
</comment>
<dbReference type="EC" id="2.7.7.101" evidence="1"/>
<dbReference type="EMBL" id="CP000780">
    <property type="protein sequence ID" value="ABS55364.1"/>
    <property type="molecule type" value="Genomic_DNA"/>
</dbReference>
<dbReference type="RefSeq" id="WP_012106388.1">
    <property type="nucleotide sequence ID" value="NC_009712.1"/>
</dbReference>
<dbReference type="SMR" id="A7I6K3"/>
<dbReference type="STRING" id="456442.Mboo_0846"/>
<dbReference type="GeneID" id="5410035"/>
<dbReference type="KEGG" id="mbn:Mboo_0846"/>
<dbReference type="eggNOG" id="arCOG04281">
    <property type="taxonomic scope" value="Archaea"/>
</dbReference>
<dbReference type="HOGENOM" id="CLU_034626_0_0_2"/>
<dbReference type="OrthoDB" id="8643at2157"/>
<dbReference type="Proteomes" id="UP000002408">
    <property type="component" value="Chromosome"/>
</dbReference>
<dbReference type="GO" id="GO:0005737">
    <property type="term" value="C:cytoplasm"/>
    <property type="evidence" value="ECO:0007669"/>
    <property type="project" value="TreeGrafter"/>
</dbReference>
<dbReference type="GO" id="GO:0000428">
    <property type="term" value="C:DNA-directed RNA polymerase complex"/>
    <property type="evidence" value="ECO:0007669"/>
    <property type="project" value="UniProtKB-KW"/>
</dbReference>
<dbReference type="GO" id="GO:0000178">
    <property type="term" value="C:exosome (RNase complex)"/>
    <property type="evidence" value="ECO:0007669"/>
    <property type="project" value="InterPro"/>
</dbReference>
<dbReference type="GO" id="GO:1990077">
    <property type="term" value="C:primosome complex"/>
    <property type="evidence" value="ECO:0007669"/>
    <property type="project" value="UniProtKB-KW"/>
</dbReference>
<dbReference type="GO" id="GO:0003899">
    <property type="term" value="F:DNA-directed RNA polymerase activity"/>
    <property type="evidence" value="ECO:0007669"/>
    <property type="project" value="InterPro"/>
</dbReference>
<dbReference type="GO" id="GO:0046872">
    <property type="term" value="F:metal ion binding"/>
    <property type="evidence" value="ECO:0007669"/>
    <property type="project" value="UniProtKB-KW"/>
</dbReference>
<dbReference type="GO" id="GO:0008143">
    <property type="term" value="F:poly(A) binding"/>
    <property type="evidence" value="ECO:0007669"/>
    <property type="project" value="InterPro"/>
</dbReference>
<dbReference type="GO" id="GO:0006269">
    <property type="term" value="P:DNA replication, synthesis of primer"/>
    <property type="evidence" value="ECO:0007669"/>
    <property type="project" value="UniProtKB-UniRule"/>
</dbReference>
<dbReference type="CDD" id="cd01029">
    <property type="entry name" value="TOPRIM_primases"/>
    <property type="match status" value="1"/>
</dbReference>
<dbReference type="FunFam" id="3.40.1360.10:FF:000010">
    <property type="entry name" value="DNA primase DnaG"/>
    <property type="match status" value="1"/>
</dbReference>
<dbReference type="Gene3D" id="3.40.1360.10">
    <property type="match status" value="1"/>
</dbReference>
<dbReference type="HAMAP" id="MF_00007">
    <property type="entry name" value="DNA_primase_DnaG_arc"/>
    <property type="match status" value="1"/>
</dbReference>
<dbReference type="InterPro" id="IPR050219">
    <property type="entry name" value="DnaG_primase"/>
</dbReference>
<dbReference type="InterPro" id="IPR020607">
    <property type="entry name" value="Primase_DnaG_arc"/>
</dbReference>
<dbReference type="InterPro" id="IPR034154">
    <property type="entry name" value="TOPRIM_DnaG/twinkle"/>
</dbReference>
<dbReference type="InterPro" id="IPR006171">
    <property type="entry name" value="TOPRIM_dom"/>
</dbReference>
<dbReference type="NCBIfam" id="NF003108">
    <property type="entry name" value="PRK04031.1-1"/>
    <property type="match status" value="1"/>
</dbReference>
<dbReference type="PANTHER" id="PTHR30313">
    <property type="entry name" value="DNA PRIMASE"/>
    <property type="match status" value="1"/>
</dbReference>
<dbReference type="PANTHER" id="PTHR30313:SF2">
    <property type="entry name" value="DNA PRIMASE"/>
    <property type="match status" value="1"/>
</dbReference>
<dbReference type="Pfam" id="PF13662">
    <property type="entry name" value="Toprim_4"/>
    <property type="match status" value="1"/>
</dbReference>
<dbReference type="SMART" id="SM00493">
    <property type="entry name" value="TOPRIM"/>
    <property type="match status" value="1"/>
</dbReference>
<dbReference type="SUPFAM" id="SSF56731">
    <property type="entry name" value="DNA primase core"/>
    <property type="match status" value="1"/>
</dbReference>
<dbReference type="PROSITE" id="PS50880">
    <property type="entry name" value="TOPRIM"/>
    <property type="match status" value="1"/>
</dbReference>
<feature type="chain" id="PRO_1000000556" description="DNA primase DnaG">
    <location>
        <begin position="1"/>
        <end position="415"/>
    </location>
</feature>
<feature type="domain" description="Toprim" evidence="1">
    <location>
        <begin position="171"/>
        <end position="250"/>
    </location>
</feature>
<feature type="region of interest" description="Disordered" evidence="2">
    <location>
        <begin position="280"/>
        <end position="323"/>
    </location>
</feature>
<feature type="compositionally biased region" description="Polar residues" evidence="2">
    <location>
        <begin position="301"/>
        <end position="311"/>
    </location>
</feature>
<feature type="binding site" evidence="1">
    <location>
        <position position="177"/>
    </location>
    <ligand>
        <name>Mg(2+)</name>
        <dbReference type="ChEBI" id="CHEBI:18420"/>
        <label>1</label>
        <note>catalytic</note>
    </ligand>
</feature>
<feature type="binding site" evidence="1">
    <location>
        <position position="219"/>
    </location>
    <ligand>
        <name>Mg(2+)</name>
        <dbReference type="ChEBI" id="CHEBI:18420"/>
        <label>1</label>
        <note>catalytic</note>
    </ligand>
</feature>
<feature type="binding site" evidence="1">
    <location>
        <position position="219"/>
    </location>
    <ligand>
        <name>Mg(2+)</name>
        <dbReference type="ChEBI" id="CHEBI:18420"/>
        <label>2</label>
    </ligand>
</feature>
<feature type="binding site" evidence="1">
    <location>
        <position position="221"/>
    </location>
    <ligand>
        <name>Mg(2+)</name>
        <dbReference type="ChEBI" id="CHEBI:18420"/>
        <label>2</label>
    </ligand>
</feature>
<gene>
    <name evidence="1" type="primary">dnaG</name>
    <name type="ordered locus">Mboo_0846</name>
</gene>